<name>ATG8_COLHI</name>
<accession>A0A1B7XV12</accession>
<protein>
    <recommendedName>
        <fullName evidence="4">Autophagy-related protein 8</fullName>
    </recommendedName>
</protein>
<reference evidence="7" key="1">
    <citation type="journal article" date="2017" name="BMC Genomics">
        <title>Gapless genome assembly of Colletotrichum higginsianum reveals chromosome structure and association of transposable elements with secondary metabolite gene clusters.</title>
        <authorList>
            <person name="Dallery J.-F."/>
            <person name="Lapalu N."/>
            <person name="Zampounis A."/>
            <person name="Pigne S."/>
            <person name="Luyten I."/>
            <person name="Amselem J."/>
            <person name="Wittenberg A.H.J."/>
            <person name="Zhou S."/>
            <person name="de Queiroz M.V."/>
            <person name="Robin G.P."/>
            <person name="Auger A."/>
            <person name="Hainaut M."/>
            <person name="Henrissat B."/>
            <person name="Kim K.-T."/>
            <person name="Lee Y.-H."/>
            <person name="Lespinet O."/>
            <person name="Schwartz D.C."/>
            <person name="Thon M.R."/>
            <person name="O'Connell R.J."/>
        </authorList>
    </citation>
    <scope>NUCLEOTIDE SEQUENCE [LARGE SCALE GENOMIC DNA]</scope>
    <source>
        <strain evidence="7">IMI 349063</strain>
    </source>
</reference>
<reference evidence="5" key="2">
    <citation type="journal article" date="2022" name="Commun. Biol.">
        <title>Mitochondrial prohibitin complex regulates fungal virulence via ATG24-assisted mitophagy.</title>
        <authorList>
            <person name="Yan Y."/>
            <person name="Tang J."/>
            <person name="Yuan Q."/>
            <person name="Liu C."/>
            <person name="Chen X."/>
            <person name="Liu H."/>
            <person name="Huang J."/>
            <person name="Bao C."/>
            <person name="Hsiang T."/>
            <person name="Zheng L."/>
        </authorList>
    </citation>
    <scope>FUNCTION</scope>
    <scope>DISRUPTION PHENOTYPE</scope>
</reference>
<evidence type="ECO:0000250" key="1">
    <source>
        <dbReference type="UniProtKB" id="P38182"/>
    </source>
</evidence>
<evidence type="ECO:0000256" key="2">
    <source>
        <dbReference type="SAM" id="MobiDB-lite"/>
    </source>
</evidence>
<evidence type="ECO:0000269" key="3">
    <source>
    </source>
</evidence>
<evidence type="ECO:0000303" key="4">
    <source>
    </source>
</evidence>
<evidence type="ECO:0000305" key="5"/>
<evidence type="ECO:0000312" key="6">
    <source>
        <dbReference type="EMBL" id="OBR03578.1"/>
    </source>
</evidence>
<evidence type="ECO:0000312" key="7">
    <source>
        <dbReference type="Proteomes" id="UP000092177"/>
    </source>
</evidence>
<keyword id="KW-0072">Autophagy</keyword>
<keyword id="KW-0968">Cytoplasmic vesicle</keyword>
<keyword id="KW-0449">Lipoprotein</keyword>
<keyword id="KW-0472">Membrane</keyword>
<keyword id="KW-1185">Reference proteome</keyword>
<keyword id="KW-0926">Vacuole</keyword>
<feature type="chain" id="PRO_0000461186" description="Autophagy-related protein 8">
    <location>
        <begin position="1"/>
        <end position="162"/>
    </location>
</feature>
<feature type="propeptide" id="PRO_0000461187" description="Removed in mature form" evidence="1">
    <location>
        <begin position="158"/>
        <end position="162"/>
    </location>
</feature>
<feature type="region of interest" description="Disordered" evidence="2">
    <location>
        <begin position="1"/>
        <end position="42"/>
    </location>
</feature>
<feature type="compositionally biased region" description="Basic and acidic residues" evidence="2">
    <location>
        <begin position="1"/>
        <end position="27"/>
    </location>
</feature>
<feature type="site" description="Cleavage; by ATG4" evidence="1">
    <location>
        <begin position="157"/>
        <end position="158"/>
    </location>
</feature>
<feature type="lipid moiety-binding region" description="Phosphatidylethanolamine amidated glycine" evidence="1">
    <location>
        <position position="157"/>
    </location>
</feature>
<gene>
    <name evidence="4" type="primary">ATG8</name>
    <name evidence="6" type="ORF">CH63R_12705</name>
</gene>
<sequence>MRSKFKDEHPFEKRKAEAERIRQKYSDRIPPSPHSPASRLIGGAPRPPVITADLVSTVEDSAPLTKAFAVQVICEKVEKSDIATIDKKKYLVPADLTVGQFVYVIRKRIKLSPEKAIFIFVDEVLPPTAALMSSIYEEHKDEDGFLYITYSGENTFGGFETA</sequence>
<organism evidence="7">
    <name type="scientific">Colletotrichum higginsianum (strain IMI 349063)</name>
    <name type="common">Crucifer anthracnose fungus</name>
    <dbReference type="NCBI Taxonomy" id="759273"/>
    <lineage>
        <taxon>Eukaryota</taxon>
        <taxon>Fungi</taxon>
        <taxon>Dikarya</taxon>
        <taxon>Ascomycota</taxon>
        <taxon>Pezizomycotina</taxon>
        <taxon>Sordariomycetes</taxon>
        <taxon>Hypocreomycetidae</taxon>
        <taxon>Glomerellales</taxon>
        <taxon>Glomerellaceae</taxon>
        <taxon>Colletotrichum</taxon>
        <taxon>Colletotrichum destructivum species complex</taxon>
    </lineage>
</organism>
<dbReference type="EMBL" id="LTAN01000009">
    <property type="protein sequence ID" value="OBR03578.1"/>
    <property type="molecule type" value="Genomic_DNA"/>
</dbReference>
<dbReference type="RefSeq" id="XP_018152096.1">
    <property type="nucleotide sequence ID" value="XM_018307679.1"/>
</dbReference>
<dbReference type="SMR" id="A0A1B7XV12"/>
<dbReference type="GeneID" id="28871786"/>
<dbReference type="KEGG" id="chig:CH63R_12705"/>
<dbReference type="VEuPathDB" id="FungiDB:CH63R_12705"/>
<dbReference type="OrthoDB" id="38106at1028384"/>
<dbReference type="Proteomes" id="UP000092177">
    <property type="component" value="Chromosome 9"/>
</dbReference>
<dbReference type="GO" id="GO:0000421">
    <property type="term" value="C:autophagosome membrane"/>
    <property type="evidence" value="ECO:0007669"/>
    <property type="project" value="UniProtKB-SubCell"/>
</dbReference>
<dbReference type="GO" id="GO:0031410">
    <property type="term" value="C:cytoplasmic vesicle"/>
    <property type="evidence" value="ECO:0007669"/>
    <property type="project" value="UniProtKB-KW"/>
</dbReference>
<dbReference type="GO" id="GO:0000423">
    <property type="term" value="P:mitophagy"/>
    <property type="evidence" value="ECO:0000315"/>
    <property type="project" value="UniProtKB"/>
</dbReference>
<dbReference type="CDD" id="cd16128">
    <property type="entry name" value="Ubl_ATG8"/>
    <property type="match status" value="1"/>
</dbReference>
<dbReference type="Gene3D" id="3.10.20.90">
    <property type="entry name" value="Phosphatidylinositol 3-kinase Catalytic Subunit, Chain A, domain 1"/>
    <property type="match status" value="2"/>
</dbReference>
<dbReference type="InterPro" id="IPR004241">
    <property type="entry name" value="Atg8-like"/>
</dbReference>
<dbReference type="InterPro" id="IPR029071">
    <property type="entry name" value="Ubiquitin-like_domsf"/>
</dbReference>
<dbReference type="PANTHER" id="PTHR10969">
    <property type="entry name" value="MICROTUBULE-ASSOCIATED PROTEINS 1A/1B LIGHT CHAIN 3-RELATED"/>
    <property type="match status" value="1"/>
</dbReference>
<dbReference type="Pfam" id="PF02991">
    <property type="entry name" value="ATG8"/>
    <property type="match status" value="1"/>
</dbReference>
<dbReference type="SUPFAM" id="SSF54236">
    <property type="entry name" value="Ubiquitin-like"/>
    <property type="match status" value="1"/>
</dbReference>
<comment type="function">
    <text evidence="1 3">Ubiquitin-like modifier involved in autophagosome formation (By similarity). With ATG4, mediates the delivery of the autophagosomes to the vacuole via the microtubule cytoskeleton (By similarity). Required for selective autophagic degradation of the nucleus (nucleophagy) as well as for mitophagy which contributes to regulate mitochondrial quantity and quality by eliminating the mitochondria to a basal level to fulfill cellular energy requirements and preventing excess ROS production (PubMed:35835849). Also participates in membrane fusion events that take place in the early secretory pathway (By similarity). Also involved in endoplasmic reticulum-specific autophagic process and is essential for the survival of cells subjected to severe ER stress. The ATG8-PE conjugate mediates tethering between adjacent membranes and stimulates membrane hemifusion, leading to expansion of the autophagosomal membrane during autophagy (By similarity).</text>
</comment>
<comment type="subcellular location">
    <subcellularLocation>
        <location evidence="1">Cytoplasmic vesicle</location>
        <location evidence="1">Autophagosome membrane</location>
        <topology evidence="1">Lipid-anchor</topology>
    </subcellularLocation>
    <subcellularLocation>
        <location evidence="1">Vacuole membrane</location>
        <topology evidence="1">Lipid-anchor</topology>
    </subcellularLocation>
</comment>
<comment type="disruption phenotype">
    <text evidence="3">Abrogates mitophagy.</text>
</comment>
<comment type="similarity">
    <text evidence="5">Belongs to the ATG8 family.</text>
</comment>
<proteinExistence type="inferred from homology"/>